<accession>B3EGP8</accession>
<protein>
    <recommendedName>
        <fullName evidence="1">Trigger factor</fullName>
        <shortName evidence="1">TF</shortName>
        <ecNumber evidence="1">5.2.1.8</ecNumber>
    </recommendedName>
    <alternativeName>
        <fullName evidence="1">PPIase</fullName>
    </alternativeName>
</protein>
<comment type="function">
    <text evidence="1">Involved in protein export. Acts as a chaperone by maintaining the newly synthesized protein in an open conformation. Functions as a peptidyl-prolyl cis-trans isomerase.</text>
</comment>
<comment type="catalytic activity">
    <reaction evidence="1">
        <text>[protein]-peptidylproline (omega=180) = [protein]-peptidylproline (omega=0)</text>
        <dbReference type="Rhea" id="RHEA:16237"/>
        <dbReference type="Rhea" id="RHEA-COMP:10747"/>
        <dbReference type="Rhea" id="RHEA-COMP:10748"/>
        <dbReference type="ChEBI" id="CHEBI:83833"/>
        <dbReference type="ChEBI" id="CHEBI:83834"/>
        <dbReference type="EC" id="5.2.1.8"/>
    </reaction>
</comment>
<comment type="subcellular location">
    <subcellularLocation>
        <location>Cytoplasm</location>
    </subcellularLocation>
    <text evidence="1">About half TF is bound to the ribosome near the polypeptide exit tunnel while the other half is free in the cytoplasm.</text>
</comment>
<comment type="domain">
    <text evidence="1">Consists of 3 domains; the N-terminus binds the ribosome, the middle domain has PPIase activity, while the C-terminus has intrinsic chaperone activity on its own.</text>
</comment>
<comment type="similarity">
    <text evidence="1">Belongs to the FKBP-type PPIase family. Tig subfamily.</text>
</comment>
<name>TIG_CHLL2</name>
<keyword id="KW-0131">Cell cycle</keyword>
<keyword id="KW-0132">Cell division</keyword>
<keyword id="KW-0143">Chaperone</keyword>
<keyword id="KW-0963">Cytoplasm</keyword>
<keyword id="KW-0413">Isomerase</keyword>
<keyword id="KW-0697">Rotamase</keyword>
<feature type="chain" id="PRO_1000115514" description="Trigger factor">
    <location>
        <begin position="1"/>
        <end position="427"/>
    </location>
</feature>
<feature type="domain" description="PPIase FKBP-type" evidence="1">
    <location>
        <begin position="160"/>
        <end position="240"/>
    </location>
</feature>
<reference key="1">
    <citation type="submission" date="2008-05" db="EMBL/GenBank/DDBJ databases">
        <title>Complete sequence of Chlorobium limicola DSM 245.</title>
        <authorList>
            <consortium name="US DOE Joint Genome Institute"/>
            <person name="Lucas S."/>
            <person name="Copeland A."/>
            <person name="Lapidus A."/>
            <person name="Glavina del Rio T."/>
            <person name="Dalin E."/>
            <person name="Tice H."/>
            <person name="Bruce D."/>
            <person name="Goodwin L."/>
            <person name="Pitluck S."/>
            <person name="Schmutz J."/>
            <person name="Larimer F."/>
            <person name="Land M."/>
            <person name="Hauser L."/>
            <person name="Kyrpides N."/>
            <person name="Ovchinnikova G."/>
            <person name="Zhao F."/>
            <person name="Li T."/>
            <person name="Liu Z."/>
            <person name="Overmann J."/>
            <person name="Bryant D.A."/>
            <person name="Richardson P."/>
        </authorList>
    </citation>
    <scope>NUCLEOTIDE SEQUENCE [LARGE SCALE GENOMIC DNA]</scope>
    <source>
        <strain>DSM 245 / NBRC 103803 / 6330</strain>
    </source>
</reference>
<evidence type="ECO:0000255" key="1">
    <source>
        <dbReference type="HAMAP-Rule" id="MF_00303"/>
    </source>
</evidence>
<gene>
    <name evidence="1" type="primary">tig</name>
    <name type="ordered locus">Clim_2137</name>
</gene>
<dbReference type="EC" id="5.2.1.8" evidence="1"/>
<dbReference type="EMBL" id="CP001097">
    <property type="protein sequence ID" value="ACD91161.1"/>
    <property type="molecule type" value="Genomic_DNA"/>
</dbReference>
<dbReference type="RefSeq" id="WP_012467030.1">
    <property type="nucleotide sequence ID" value="NC_010803.1"/>
</dbReference>
<dbReference type="SMR" id="B3EGP8"/>
<dbReference type="STRING" id="290315.Clim_2137"/>
<dbReference type="KEGG" id="cli:Clim_2137"/>
<dbReference type="eggNOG" id="COG0544">
    <property type="taxonomic scope" value="Bacteria"/>
</dbReference>
<dbReference type="HOGENOM" id="CLU_033058_3_1_10"/>
<dbReference type="OrthoDB" id="9767721at2"/>
<dbReference type="Proteomes" id="UP000008841">
    <property type="component" value="Chromosome"/>
</dbReference>
<dbReference type="GO" id="GO:0005737">
    <property type="term" value="C:cytoplasm"/>
    <property type="evidence" value="ECO:0007669"/>
    <property type="project" value="UniProtKB-SubCell"/>
</dbReference>
<dbReference type="GO" id="GO:0003755">
    <property type="term" value="F:peptidyl-prolyl cis-trans isomerase activity"/>
    <property type="evidence" value="ECO:0007669"/>
    <property type="project" value="UniProtKB-UniRule"/>
</dbReference>
<dbReference type="GO" id="GO:0051301">
    <property type="term" value="P:cell division"/>
    <property type="evidence" value="ECO:0007669"/>
    <property type="project" value="UniProtKB-KW"/>
</dbReference>
<dbReference type="GO" id="GO:0006457">
    <property type="term" value="P:protein folding"/>
    <property type="evidence" value="ECO:0007669"/>
    <property type="project" value="UniProtKB-UniRule"/>
</dbReference>
<dbReference type="GO" id="GO:0015031">
    <property type="term" value="P:protein transport"/>
    <property type="evidence" value="ECO:0007669"/>
    <property type="project" value="UniProtKB-UniRule"/>
</dbReference>
<dbReference type="Gene3D" id="3.10.50.40">
    <property type="match status" value="1"/>
</dbReference>
<dbReference type="Gene3D" id="3.30.70.1050">
    <property type="entry name" value="Trigger factor ribosome-binding domain"/>
    <property type="match status" value="1"/>
</dbReference>
<dbReference type="Gene3D" id="1.10.3120.10">
    <property type="entry name" value="Trigger factor, C-terminal domain"/>
    <property type="match status" value="1"/>
</dbReference>
<dbReference type="HAMAP" id="MF_00303">
    <property type="entry name" value="Trigger_factor_Tig"/>
    <property type="match status" value="1"/>
</dbReference>
<dbReference type="InterPro" id="IPR046357">
    <property type="entry name" value="PPIase_dom_sf"/>
</dbReference>
<dbReference type="InterPro" id="IPR005215">
    <property type="entry name" value="Trig_fac"/>
</dbReference>
<dbReference type="InterPro" id="IPR008880">
    <property type="entry name" value="Trigger_fac_C"/>
</dbReference>
<dbReference type="InterPro" id="IPR037041">
    <property type="entry name" value="Trigger_fac_C_sf"/>
</dbReference>
<dbReference type="InterPro" id="IPR008881">
    <property type="entry name" value="Trigger_fac_ribosome-bd_bac"/>
</dbReference>
<dbReference type="InterPro" id="IPR036611">
    <property type="entry name" value="Trigger_fac_ribosome-bd_sf"/>
</dbReference>
<dbReference type="InterPro" id="IPR027304">
    <property type="entry name" value="Trigger_fact/SurA_dom_sf"/>
</dbReference>
<dbReference type="NCBIfam" id="TIGR00115">
    <property type="entry name" value="tig"/>
    <property type="match status" value="1"/>
</dbReference>
<dbReference type="Pfam" id="PF05698">
    <property type="entry name" value="Trigger_C"/>
    <property type="match status" value="1"/>
</dbReference>
<dbReference type="Pfam" id="PF05697">
    <property type="entry name" value="Trigger_N"/>
    <property type="match status" value="1"/>
</dbReference>
<dbReference type="PIRSF" id="PIRSF003095">
    <property type="entry name" value="Trigger_factor"/>
    <property type="match status" value="1"/>
</dbReference>
<dbReference type="SUPFAM" id="SSF54534">
    <property type="entry name" value="FKBP-like"/>
    <property type="match status" value="1"/>
</dbReference>
<dbReference type="SUPFAM" id="SSF109998">
    <property type="entry name" value="Triger factor/SurA peptide-binding domain-like"/>
    <property type="match status" value="1"/>
</dbReference>
<dbReference type="SUPFAM" id="SSF102735">
    <property type="entry name" value="Trigger factor ribosome-binding domain"/>
    <property type="match status" value="1"/>
</dbReference>
<proteinExistence type="inferred from homology"/>
<sequence length="427" mass="47882">MQKNITKISDTEQELEIILSAEEFGTEYNQELEEAKRTVQIKGFRKGHVPAGMIKKLVGPAIEASIAEKMASKHFSAIADEENIKPASRAAIESFSFDDNQLSIKLSYEIHPEFELKGFEGYTFTQPRYTITDEDVQKEINLILKGHGTLISIDDAASATDTVIGDVVKLNAEGEAEEGSAMENHHFNLEYLPEENPFRSALTGKKAGEIADVTTEPKDEETPAQIYRITVKEVKRLELPELTDELVKEISGQRFEHAADFTSDVRLQLEQHFTMKSEDELLESISAKLIEENPVSAPKTMIASFANMLVENAKRQMGGNFPKGFDAGQFEQAMAPNAEKHARWLLISQKIAEINNLSVTDDDIRAFAEKEAEKNPTLSVEEAISTYMSTEFRDYITDSILKDKVYDIIKSQVTITEEPTPIPVRQN</sequence>
<organism>
    <name type="scientific">Chlorobium limicola (strain DSM 245 / NBRC 103803 / 6330)</name>
    <dbReference type="NCBI Taxonomy" id="290315"/>
    <lineage>
        <taxon>Bacteria</taxon>
        <taxon>Pseudomonadati</taxon>
        <taxon>Chlorobiota</taxon>
        <taxon>Chlorobiia</taxon>
        <taxon>Chlorobiales</taxon>
        <taxon>Chlorobiaceae</taxon>
        <taxon>Chlorobium/Pelodictyon group</taxon>
        <taxon>Chlorobium</taxon>
    </lineage>
</organism>